<protein>
    <recommendedName>
        <fullName>B-phycoerythrin beta chain</fullName>
    </recommendedName>
</protein>
<name>PHEB_PORSO</name>
<dbReference type="PIR" id="S27327">
    <property type="entry name" value="S27327"/>
</dbReference>
<dbReference type="SMR" id="P29948"/>
<dbReference type="iPTMnet" id="P29948"/>
<dbReference type="GO" id="GO:0009535">
    <property type="term" value="C:chloroplast thylakoid membrane"/>
    <property type="evidence" value="ECO:0007669"/>
    <property type="project" value="UniProtKB-SubCell"/>
</dbReference>
<dbReference type="GO" id="GO:0030089">
    <property type="term" value="C:phycobilisome"/>
    <property type="evidence" value="ECO:0007669"/>
    <property type="project" value="UniProtKB-KW"/>
</dbReference>
<dbReference type="GO" id="GO:0015979">
    <property type="term" value="P:photosynthesis"/>
    <property type="evidence" value="ECO:0007669"/>
    <property type="project" value="UniProtKB-KW"/>
</dbReference>
<dbReference type="CDD" id="cd14767">
    <property type="entry name" value="PE_beta-like"/>
    <property type="match status" value="1"/>
</dbReference>
<dbReference type="Gene3D" id="1.10.490.20">
    <property type="entry name" value="Phycocyanins"/>
    <property type="match status" value="1"/>
</dbReference>
<dbReference type="InterPro" id="IPR009050">
    <property type="entry name" value="Globin-like_sf"/>
</dbReference>
<dbReference type="InterPro" id="IPR012128">
    <property type="entry name" value="Phycobilisome_asu/bsu"/>
</dbReference>
<dbReference type="InterPro" id="IPR038719">
    <property type="entry name" value="Phycobilisome_asu/bsu_sf"/>
</dbReference>
<dbReference type="PANTHER" id="PTHR34011:SF7">
    <property type="entry name" value="C-PHYCOCYANIN BETA SUBUNIT"/>
    <property type="match status" value="1"/>
</dbReference>
<dbReference type="PANTHER" id="PTHR34011">
    <property type="entry name" value="PHYCOBILISOME 32.1 KDA LINKER POLYPEPTIDE, PHYCOCYANIN-ASSOCIATED, ROD 2-RELATED"/>
    <property type="match status" value="1"/>
</dbReference>
<dbReference type="Pfam" id="PF00502">
    <property type="entry name" value="Phycobilisome"/>
    <property type="match status" value="1"/>
</dbReference>
<dbReference type="PIRSF" id="PIRSF000081">
    <property type="entry name" value="Phycocyanin"/>
    <property type="match status" value="1"/>
</dbReference>
<dbReference type="SUPFAM" id="SSF46458">
    <property type="entry name" value="Globin-like"/>
    <property type="match status" value="1"/>
</dbReference>
<accession>P29948</accession>
<evidence type="ECO:0000250" key="1"/>
<evidence type="ECO:0000269" key="2">
    <source>
    </source>
</evidence>
<evidence type="ECO:0000305" key="3"/>
<keyword id="KW-0042">Antenna complex</keyword>
<keyword id="KW-0089">Bile pigment</keyword>
<keyword id="KW-0150">Chloroplast</keyword>
<keyword id="KW-0157">Chromophore</keyword>
<keyword id="KW-0903">Direct protein sequencing</keyword>
<keyword id="KW-0249">Electron transport</keyword>
<keyword id="KW-0472">Membrane</keyword>
<keyword id="KW-0488">Methylation</keyword>
<keyword id="KW-0602">Photosynthesis</keyword>
<keyword id="KW-0605">Phycobilisome</keyword>
<keyword id="KW-0934">Plastid</keyword>
<keyword id="KW-0793">Thylakoid</keyword>
<keyword id="KW-0813">Transport</keyword>
<feature type="chain" id="PRO_0000199196" description="B-phycoerythrin beta chain">
    <location>
        <begin position="1"/>
        <end position="177"/>
    </location>
</feature>
<feature type="binding site" description="covalent" evidence="1">
    <location>
        <position position="50"/>
    </location>
    <ligand>
        <name>phycourobilin</name>
        <dbReference type="ChEBI" id="CHEBI:189062"/>
    </ligand>
</feature>
<feature type="binding site" description="covalent" evidence="1">
    <location>
        <position position="61"/>
    </location>
    <ligand>
        <name>phycourobilin</name>
        <dbReference type="ChEBI" id="CHEBI:189062"/>
    </ligand>
</feature>
<feature type="binding site" description="covalent">
    <location>
        <position position="82"/>
    </location>
    <ligand>
        <name>(2R,3E)-phycoerythrobilin</name>
        <dbReference type="ChEBI" id="CHEBI:85276"/>
        <label>1</label>
    </ligand>
</feature>
<feature type="binding site" description="covalent">
    <location>
        <position position="158"/>
    </location>
    <ligand>
        <name>(2R,3E)-phycoerythrobilin</name>
        <dbReference type="ChEBI" id="CHEBI:85276"/>
        <label>2</label>
    </ligand>
</feature>
<feature type="modified residue" description="N4-methylasparagine" evidence="2">
    <location>
        <position position="72"/>
    </location>
</feature>
<geneLocation type="chloroplast"/>
<organism>
    <name type="scientific">Porphyridium sordidum</name>
    <name type="common">Red alga</name>
    <dbReference type="NCBI Taxonomy" id="28024"/>
    <lineage>
        <taxon>Eukaryota</taxon>
        <taxon>Rhodophyta</taxon>
        <taxon>Bangiophyceae</taxon>
        <taxon>Porphyridiales</taxon>
        <taxon>Porphyridiaceae</taxon>
        <taxon>Porphyridium</taxon>
    </lineage>
</organism>
<reference key="1">
    <citation type="journal article" date="1992" name="J. Mol. Biol.">
        <title>Isolation, crystallization, crystal structure analysis and refinement of B-phycoerythrin from the red alga Porphyridium sordidum at 2.2-A resolution.</title>
        <authorList>
            <person name="Ficner R."/>
            <person name="Lobeck K."/>
            <person name="Schmidt G."/>
            <person name="Huber R."/>
        </authorList>
    </citation>
    <scope>X-RAY CRYSTALLOGRAPHY (2.2 ANGSTROMS)</scope>
    <scope>METHYLATION AT ASN-72</scope>
    <scope>PARTIAL PROTEIN SEQUENCE</scope>
</reference>
<comment type="function">
    <text>Light-harvesting photosynthetic bile pigment-protein from the phycobiliprotein complex.</text>
</comment>
<comment type="subunit">
    <text>Heteromer of 6 alpha, 6 beta and one gamma chain.</text>
</comment>
<comment type="subcellular location">
    <subcellularLocation>
        <location evidence="1">Plastid</location>
        <location evidence="1">Chloroplast thylakoid membrane</location>
        <topology evidence="1">Peripheral membrane protein</topology>
        <orientation evidence="1">Stromal side</orientation>
    </subcellularLocation>
    <text evidence="1">Forms the periphery of the phycobilisome rod.</text>
</comment>
<comment type="PTM">
    <text evidence="1">Contains two covalently linked phycoerythrobilin chromophores and one covalently linked phycourobilin chromophore.</text>
</comment>
<comment type="similarity">
    <text evidence="3">Belongs to the phycobiliprotein family.</text>
</comment>
<proteinExistence type="evidence at protein level"/>
<gene>
    <name type="primary">cpeB</name>
</gene>
<sequence>MLDAFSRVVVNSDAKAAYVGGSDLQALKSFIADGNKRLDSVNAIVSNASCMVSDAVSGMICENPGLISPGGNCYTNRRMAACLRDGEIILRYVSYALLAGDASVLEDRCLNGLKETYIALGVPTNSSIRAVSIMKAQAVAFITNTATERKMSFAAGDCTSLASEVASYFDRVGAAIS</sequence>